<feature type="chain" id="PRO_0000282648" description="Transmembrane protein 177">
    <location>
        <begin position="1"/>
        <end position="311"/>
    </location>
</feature>
<feature type="topological domain" description="Mitochondrial matrix" evidence="3">
    <location>
        <begin position="1"/>
        <end position="17"/>
    </location>
</feature>
<feature type="transmembrane region" description="Helical" evidence="2">
    <location>
        <begin position="18"/>
        <end position="38"/>
    </location>
</feature>
<feature type="topological domain" description="Mitochondrial intermembrane" evidence="3">
    <location>
        <begin position="39"/>
        <end position="164"/>
    </location>
</feature>
<feature type="transmembrane region" description="Helical" evidence="2">
    <location>
        <begin position="165"/>
        <end position="185"/>
    </location>
</feature>
<feature type="topological domain" description="Mitochondrial matrix" evidence="3">
    <location>
        <begin position="186"/>
        <end position="197"/>
    </location>
</feature>
<feature type="transmembrane region" description="Helical" evidence="2">
    <location>
        <begin position="198"/>
        <end position="218"/>
    </location>
</feature>
<feature type="topological domain" description="Mitochondrial intermembrane" evidence="3">
    <location>
        <begin position="219"/>
        <end position="311"/>
    </location>
</feature>
<proteinExistence type="evidence at transcript level"/>
<name>TM177_RAT</name>
<comment type="function">
    <text evidence="1">Plays a role in the early steps of cytochrome c oxidase subunit II (MT-CO2/COX2) maturation and is required for the stabilization of COX20 and the newly synthesized MT-CO2/COX2 protein.</text>
</comment>
<comment type="subunit">
    <text evidence="1">Found in a complex with COX20, COA6, MT-CO2/COX2, COX18, SCO1 and SCO2. Interacts with COX20. Interacts with COX1, MT-CO2/COX2, SCO1 and SCO2 in a COX20-dependent manner.</text>
</comment>
<comment type="subcellular location">
    <subcellularLocation>
        <location evidence="1">Mitochondrion inner membrane</location>
        <topology evidence="2">Multi-pass membrane protein</topology>
    </subcellularLocation>
</comment>
<comment type="similarity">
    <text evidence="3">Belongs to the TMEM177 family.</text>
</comment>
<reference key="1">
    <citation type="journal article" date="2004" name="Genome Res.">
        <title>The status, quality, and expansion of the NIH full-length cDNA project: the Mammalian Gene Collection (MGC).</title>
        <authorList>
            <consortium name="The MGC Project Team"/>
        </authorList>
    </citation>
    <scope>NUCLEOTIDE SEQUENCE [LARGE SCALE MRNA]</scope>
    <source>
        <tissue>Thymus</tissue>
    </source>
</reference>
<protein>
    <recommendedName>
        <fullName>Transmembrane protein 177</fullName>
    </recommendedName>
</protein>
<dbReference type="EMBL" id="BC098688">
    <property type="protein sequence ID" value="AAH98688.1"/>
    <property type="molecule type" value="mRNA"/>
</dbReference>
<dbReference type="RefSeq" id="NP_001032865.1">
    <property type="nucleotide sequence ID" value="NM_001037776.1"/>
</dbReference>
<dbReference type="RefSeq" id="XP_006249726.1">
    <property type="nucleotide sequence ID" value="XM_006249664.5"/>
</dbReference>
<dbReference type="RefSeq" id="XP_006249727.1">
    <property type="nucleotide sequence ID" value="XM_006249665.3"/>
</dbReference>
<dbReference type="RefSeq" id="XP_063128307.1">
    <property type="nucleotide sequence ID" value="XM_063272237.1"/>
</dbReference>
<dbReference type="FunCoup" id="Q4KM93">
    <property type="interactions" value="1117"/>
</dbReference>
<dbReference type="STRING" id="10116.ENSRNOP00000036312"/>
<dbReference type="PhosphoSitePlus" id="Q4KM93"/>
<dbReference type="PaxDb" id="10116-ENSRNOP00000036312"/>
<dbReference type="Ensembl" id="ENSRNOT00000039074.4">
    <property type="protein sequence ID" value="ENSRNOP00000036312.3"/>
    <property type="gene ID" value="ENSRNOG00000025484.4"/>
</dbReference>
<dbReference type="Ensembl" id="ENSRNOT00000102460.1">
    <property type="protein sequence ID" value="ENSRNOP00000094878.1"/>
    <property type="gene ID" value="ENSRNOG00000025484.4"/>
</dbReference>
<dbReference type="Ensembl" id="ENSRNOT00000118103.1">
    <property type="protein sequence ID" value="ENSRNOP00000087342.1"/>
    <property type="gene ID" value="ENSRNOG00000025484.4"/>
</dbReference>
<dbReference type="GeneID" id="304735"/>
<dbReference type="KEGG" id="rno:304735"/>
<dbReference type="AGR" id="RGD:1310320"/>
<dbReference type="CTD" id="80775"/>
<dbReference type="RGD" id="1310320">
    <property type="gene designation" value="Tmem177"/>
</dbReference>
<dbReference type="eggNOG" id="ENOG502QPPU">
    <property type="taxonomic scope" value="Eukaryota"/>
</dbReference>
<dbReference type="GeneTree" id="ENSGT00390000010354"/>
<dbReference type="HOGENOM" id="CLU_074208_0_0_1"/>
<dbReference type="InParanoid" id="Q4KM93"/>
<dbReference type="OMA" id="HTFGLKY"/>
<dbReference type="OrthoDB" id="63277at9989"/>
<dbReference type="PhylomeDB" id="Q4KM93"/>
<dbReference type="TreeFam" id="TF328369"/>
<dbReference type="Reactome" id="R-RNO-9864848">
    <property type="pathway name" value="Complex IV assembly"/>
</dbReference>
<dbReference type="PRO" id="PR:Q4KM93"/>
<dbReference type="Proteomes" id="UP000002494">
    <property type="component" value="Chromosome 13"/>
</dbReference>
<dbReference type="Bgee" id="ENSRNOG00000025484">
    <property type="expression patterns" value="Expressed in skeletal muscle tissue and 19 other cell types or tissues"/>
</dbReference>
<dbReference type="GO" id="GO:0016020">
    <property type="term" value="C:membrane"/>
    <property type="evidence" value="ECO:0000318"/>
    <property type="project" value="GO_Central"/>
</dbReference>
<dbReference type="GO" id="GO:0005743">
    <property type="term" value="C:mitochondrial inner membrane"/>
    <property type="evidence" value="ECO:0000250"/>
    <property type="project" value="UniProtKB"/>
</dbReference>
<dbReference type="InterPro" id="IPR026620">
    <property type="entry name" value="TMEM177"/>
</dbReference>
<dbReference type="PANTHER" id="PTHR21824">
    <property type="entry name" value="TRANSMEMBRANE PROTEIN 177"/>
    <property type="match status" value="1"/>
</dbReference>
<dbReference type="PANTHER" id="PTHR21824:SF4">
    <property type="entry name" value="TRANSMEMBRANE PROTEIN 177"/>
    <property type="match status" value="1"/>
</dbReference>
<evidence type="ECO:0000250" key="1">
    <source>
        <dbReference type="UniProtKB" id="Q53S58"/>
    </source>
</evidence>
<evidence type="ECO:0000255" key="2"/>
<evidence type="ECO:0000305" key="3"/>
<sequence length="311" mass="34001">MAGPLWRAAVFIQRHRTSLLVGSCVGLFGVQISFHLFPDPIVQWLYQYWPQGQPAPLSPQLRSLFQEVLKDIGVPSGHCYKPFTAFTFQPVSAGFPQLPAGAVVGIPAIFLGGLVTNIDHTVVIHGQKVDWQSPAGTRLRDALTLSHDAQKFALAKEVVYLESGMAALQTLPAPVCLAGTWAISVGAKHALGLYGGPMSLRAAFNLVAIVVGYVAYAFSKDSLTVALEGWLDHRTASLSAAYVRGGVEFYEKILSGNLALRSLLGRQGEKLYTPSGNIVPRHWFRINHLPYTTRRDSLLQMWRAKVSPGHF</sequence>
<accession>Q4KM93</accession>
<organism>
    <name type="scientific">Rattus norvegicus</name>
    <name type="common">Rat</name>
    <dbReference type="NCBI Taxonomy" id="10116"/>
    <lineage>
        <taxon>Eukaryota</taxon>
        <taxon>Metazoa</taxon>
        <taxon>Chordata</taxon>
        <taxon>Craniata</taxon>
        <taxon>Vertebrata</taxon>
        <taxon>Euteleostomi</taxon>
        <taxon>Mammalia</taxon>
        <taxon>Eutheria</taxon>
        <taxon>Euarchontoglires</taxon>
        <taxon>Glires</taxon>
        <taxon>Rodentia</taxon>
        <taxon>Myomorpha</taxon>
        <taxon>Muroidea</taxon>
        <taxon>Muridae</taxon>
        <taxon>Murinae</taxon>
        <taxon>Rattus</taxon>
    </lineage>
</organism>
<keyword id="KW-0472">Membrane</keyword>
<keyword id="KW-0496">Mitochondrion</keyword>
<keyword id="KW-0999">Mitochondrion inner membrane</keyword>
<keyword id="KW-1185">Reference proteome</keyword>
<keyword id="KW-0812">Transmembrane</keyword>
<keyword id="KW-1133">Transmembrane helix</keyword>
<gene>
    <name type="primary">Tmem177</name>
</gene>